<keyword id="KW-0287">Flowering</keyword>
<keyword id="KW-0539">Nucleus</keyword>
<keyword id="KW-1185">Reference proteome</keyword>
<evidence type="ECO:0000250" key="1">
    <source>
        <dbReference type="UniProtKB" id="Q9M9F0"/>
    </source>
</evidence>
<evidence type="ECO:0000256" key="2">
    <source>
        <dbReference type="SAM" id="MobiDB-lite"/>
    </source>
</evidence>
<evidence type="ECO:0000269" key="3">
    <source>
    </source>
</evidence>
<evidence type="ECO:0000303" key="4">
    <source>
    </source>
</evidence>
<evidence type="ECO:0000305" key="5"/>
<evidence type="ECO:0000305" key="6">
    <source>
    </source>
</evidence>
<evidence type="ECO:0000312" key="7">
    <source>
        <dbReference type="Araport" id="AT4G37710"/>
    </source>
</evidence>
<evidence type="ECO:0000312" key="8">
    <source>
        <dbReference type="EMBL" id="CAB38310.1"/>
    </source>
</evidence>
<protein>
    <recommendedName>
        <fullName evidence="4">VQ motif-containing protein 29</fullName>
        <shortName evidence="4">AtVQ29</shortName>
    </recommendedName>
</protein>
<proteinExistence type="evidence at protein level"/>
<accession>Q9SZG3</accession>
<accession>Q8LDF4</accession>
<reference key="1">
    <citation type="journal article" date="1999" name="Nature">
        <title>Sequence and analysis of chromosome 4 of the plant Arabidopsis thaliana.</title>
        <authorList>
            <person name="Mayer K.F.X."/>
            <person name="Schueller C."/>
            <person name="Wambutt R."/>
            <person name="Murphy G."/>
            <person name="Volckaert G."/>
            <person name="Pohl T."/>
            <person name="Duesterhoeft A."/>
            <person name="Stiekema W."/>
            <person name="Entian K.-D."/>
            <person name="Terryn N."/>
            <person name="Harris B."/>
            <person name="Ansorge W."/>
            <person name="Brandt P."/>
            <person name="Grivell L.A."/>
            <person name="Rieger M."/>
            <person name="Weichselgartner M."/>
            <person name="de Simone V."/>
            <person name="Obermaier B."/>
            <person name="Mache R."/>
            <person name="Mueller M."/>
            <person name="Kreis M."/>
            <person name="Delseny M."/>
            <person name="Puigdomenech P."/>
            <person name="Watson M."/>
            <person name="Schmidtheini T."/>
            <person name="Reichert B."/>
            <person name="Portetelle D."/>
            <person name="Perez-Alonso M."/>
            <person name="Boutry M."/>
            <person name="Bancroft I."/>
            <person name="Vos P."/>
            <person name="Hoheisel J."/>
            <person name="Zimmermann W."/>
            <person name="Wedler H."/>
            <person name="Ridley P."/>
            <person name="Langham S.-A."/>
            <person name="McCullagh B."/>
            <person name="Bilham L."/>
            <person name="Robben J."/>
            <person name="van der Schueren J."/>
            <person name="Grymonprez B."/>
            <person name="Chuang Y.-J."/>
            <person name="Vandenbussche F."/>
            <person name="Braeken M."/>
            <person name="Weltjens I."/>
            <person name="Voet M."/>
            <person name="Bastiaens I."/>
            <person name="Aert R."/>
            <person name="Defoor E."/>
            <person name="Weitzenegger T."/>
            <person name="Bothe G."/>
            <person name="Ramsperger U."/>
            <person name="Hilbert H."/>
            <person name="Braun M."/>
            <person name="Holzer E."/>
            <person name="Brandt A."/>
            <person name="Peters S."/>
            <person name="van Staveren M."/>
            <person name="Dirkse W."/>
            <person name="Mooijman P."/>
            <person name="Klein Lankhorst R."/>
            <person name="Rose M."/>
            <person name="Hauf J."/>
            <person name="Koetter P."/>
            <person name="Berneiser S."/>
            <person name="Hempel S."/>
            <person name="Feldpausch M."/>
            <person name="Lamberth S."/>
            <person name="Van den Daele H."/>
            <person name="De Keyser A."/>
            <person name="Buysshaert C."/>
            <person name="Gielen J."/>
            <person name="Villarroel R."/>
            <person name="De Clercq R."/>
            <person name="van Montagu M."/>
            <person name="Rogers J."/>
            <person name="Cronin A."/>
            <person name="Quail M.A."/>
            <person name="Bray-Allen S."/>
            <person name="Clark L."/>
            <person name="Doggett J."/>
            <person name="Hall S."/>
            <person name="Kay M."/>
            <person name="Lennard N."/>
            <person name="McLay K."/>
            <person name="Mayes R."/>
            <person name="Pettett A."/>
            <person name="Rajandream M.A."/>
            <person name="Lyne M."/>
            <person name="Benes V."/>
            <person name="Rechmann S."/>
            <person name="Borkova D."/>
            <person name="Bloecker H."/>
            <person name="Scharfe M."/>
            <person name="Grimm M."/>
            <person name="Loehnert T.-H."/>
            <person name="Dose S."/>
            <person name="de Haan M."/>
            <person name="Maarse A.C."/>
            <person name="Schaefer M."/>
            <person name="Mueller-Auer S."/>
            <person name="Gabel C."/>
            <person name="Fuchs M."/>
            <person name="Fartmann B."/>
            <person name="Granderath K."/>
            <person name="Dauner D."/>
            <person name="Herzl A."/>
            <person name="Neumann S."/>
            <person name="Argiriou A."/>
            <person name="Vitale D."/>
            <person name="Liguori R."/>
            <person name="Piravandi E."/>
            <person name="Massenet O."/>
            <person name="Quigley F."/>
            <person name="Clabauld G."/>
            <person name="Muendlein A."/>
            <person name="Felber R."/>
            <person name="Schnabl S."/>
            <person name="Hiller R."/>
            <person name="Schmidt W."/>
            <person name="Lecharny A."/>
            <person name="Aubourg S."/>
            <person name="Chefdor F."/>
            <person name="Cooke R."/>
            <person name="Berger C."/>
            <person name="Monfort A."/>
            <person name="Casacuberta E."/>
            <person name="Gibbons T."/>
            <person name="Weber N."/>
            <person name="Vandenbol M."/>
            <person name="Bargues M."/>
            <person name="Terol J."/>
            <person name="Torres A."/>
            <person name="Perez-Perez A."/>
            <person name="Purnelle B."/>
            <person name="Bent E."/>
            <person name="Johnson S."/>
            <person name="Tacon D."/>
            <person name="Jesse T."/>
            <person name="Heijnen L."/>
            <person name="Schwarz S."/>
            <person name="Scholler P."/>
            <person name="Heber S."/>
            <person name="Francs P."/>
            <person name="Bielke C."/>
            <person name="Frishman D."/>
            <person name="Haase D."/>
            <person name="Lemcke K."/>
            <person name="Mewes H.-W."/>
            <person name="Stocker S."/>
            <person name="Zaccaria P."/>
            <person name="Bevan M."/>
            <person name="Wilson R.K."/>
            <person name="de la Bastide M."/>
            <person name="Habermann K."/>
            <person name="Parnell L."/>
            <person name="Dedhia N."/>
            <person name="Gnoj L."/>
            <person name="Schutz K."/>
            <person name="Huang E."/>
            <person name="Spiegel L."/>
            <person name="Sekhon M."/>
            <person name="Murray J."/>
            <person name="Sheet P."/>
            <person name="Cordes M."/>
            <person name="Abu-Threideh J."/>
            <person name="Stoneking T."/>
            <person name="Kalicki J."/>
            <person name="Graves T."/>
            <person name="Harmon G."/>
            <person name="Edwards J."/>
            <person name="Latreille P."/>
            <person name="Courtney L."/>
            <person name="Cloud J."/>
            <person name="Abbott A."/>
            <person name="Scott K."/>
            <person name="Johnson D."/>
            <person name="Minx P."/>
            <person name="Bentley D."/>
            <person name="Fulton B."/>
            <person name="Miller N."/>
            <person name="Greco T."/>
            <person name="Kemp K."/>
            <person name="Kramer J."/>
            <person name="Fulton L."/>
            <person name="Mardis E."/>
            <person name="Dante M."/>
            <person name="Pepin K."/>
            <person name="Hillier L.W."/>
            <person name="Nelson J."/>
            <person name="Spieth J."/>
            <person name="Ryan E."/>
            <person name="Andrews S."/>
            <person name="Geisel C."/>
            <person name="Layman D."/>
            <person name="Du H."/>
            <person name="Ali J."/>
            <person name="Berghoff A."/>
            <person name="Jones K."/>
            <person name="Drone K."/>
            <person name="Cotton M."/>
            <person name="Joshu C."/>
            <person name="Antonoiu B."/>
            <person name="Zidanic M."/>
            <person name="Strong C."/>
            <person name="Sun H."/>
            <person name="Lamar B."/>
            <person name="Yordan C."/>
            <person name="Ma P."/>
            <person name="Zhong J."/>
            <person name="Preston R."/>
            <person name="Vil D."/>
            <person name="Shekher M."/>
            <person name="Matero A."/>
            <person name="Shah R."/>
            <person name="Swaby I.K."/>
            <person name="O'Shaughnessy A."/>
            <person name="Rodriguez M."/>
            <person name="Hoffman J."/>
            <person name="Till S."/>
            <person name="Granat S."/>
            <person name="Shohdy N."/>
            <person name="Hasegawa A."/>
            <person name="Hameed A."/>
            <person name="Lodhi M."/>
            <person name="Johnson A."/>
            <person name="Chen E."/>
            <person name="Marra M.A."/>
            <person name="Martienssen R."/>
            <person name="McCombie W.R."/>
        </authorList>
    </citation>
    <scope>NUCLEOTIDE SEQUENCE [LARGE SCALE GENOMIC DNA]</scope>
    <source>
        <strain>cv. Columbia</strain>
    </source>
</reference>
<reference key="2">
    <citation type="journal article" date="2017" name="Plant J.">
        <title>Araport11: a complete reannotation of the Arabidopsis thaliana reference genome.</title>
        <authorList>
            <person name="Cheng C.Y."/>
            <person name="Krishnakumar V."/>
            <person name="Chan A.P."/>
            <person name="Thibaud-Nissen F."/>
            <person name="Schobel S."/>
            <person name="Town C.D."/>
        </authorList>
    </citation>
    <scope>GENOME REANNOTATION</scope>
    <source>
        <strain>cv. Columbia</strain>
    </source>
</reference>
<reference key="3">
    <citation type="submission" date="2006-11" db="EMBL/GenBank/DDBJ databases">
        <title>Arabidopsis ORF Clones.</title>
        <authorList>
            <person name="Bautista V.R."/>
            <person name="Kim C.J."/>
            <person name="Chen H."/>
            <person name="Quinitio C."/>
            <person name="Ecker J.R."/>
        </authorList>
    </citation>
    <scope>NUCLEOTIDE SEQUENCE [LARGE SCALE MRNA]</scope>
    <source>
        <strain>cv. Columbia</strain>
    </source>
</reference>
<reference key="4">
    <citation type="submission" date="2002-03" db="EMBL/GenBank/DDBJ databases">
        <title>Full-length cDNA from Arabidopsis thaliana.</title>
        <authorList>
            <person name="Brover V.V."/>
            <person name="Troukhan M.E."/>
            <person name="Alexandrov N.A."/>
            <person name="Lu Y.-P."/>
            <person name="Flavell R.B."/>
            <person name="Feldmann K.A."/>
        </authorList>
    </citation>
    <scope>NUCLEOTIDE SEQUENCE [LARGE SCALE MRNA]</scope>
</reference>
<reference key="5">
    <citation type="journal article" date="2012" name="Plant Physiol.">
        <title>Structural and functional analysis of VQ motif-containing proteins in Arabidopsis as interacting proteins of WRKY transcription factors.</title>
        <authorList>
            <person name="Cheng Y."/>
            <person name="Zhou Y."/>
            <person name="Yang Y."/>
            <person name="Chi Y.J."/>
            <person name="Zhou J."/>
            <person name="Chen J.Y."/>
            <person name="Wang F."/>
            <person name="Fan B."/>
            <person name="Shi K."/>
            <person name="Zhou Y.H."/>
            <person name="Yu J.Q."/>
            <person name="Chen Z."/>
        </authorList>
    </citation>
    <scope>FUNCTION</scope>
    <scope>GENE FAMILY</scope>
    <scope>NOMENCLATURE</scope>
</reference>
<comment type="function">
    <text evidence="6">May function as negative regulator of flowering transition.</text>
</comment>
<comment type="interaction">
    <interactant intactId="EBI-25517843">
        <id>Q9SZG3</id>
    </interactant>
    <interactant intactId="EBI-4426649">
        <id>Q17TI5</id>
        <label>BRX</label>
    </interactant>
    <organismsDiffer>false</organismsDiffer>
    <experiments>3</experiments>
</comment>
<comment type="interaction">
    <interactant intactId="EBI-25517843">
        <id>Q9SZG3</id>
    </interactant>
    <interactant intactId="EBI-1235953">
        <id>Q8GY11</id>
        <label>WRKY43</label>
    </interactant>
    <organismsDiffer>false</organismsDiffer>
    <experiments>3</experiments>
</comment>
<comment type="interaction">
    <interactant intactId="EBI-25517843">
        <id>Q9SZG3</id>
    </interactant>
    <interactant intactId="EBI-25517688">
        <id>Q8VWQ4</id>
        <label>WRKY56</label>
    </interactant>
    <organismsDiffer>false</organismsDiffer>
    <experiments>3</experiments>
</comment>
<comment type="subcellular location">
    <subcellularLocation>
        <location evidence="1">Nucleus</location>
    </subcellularLocation>
</comment>
<comment type="miscellaneous">
    <text evidence="3">Plants over-expressing VQ29 have delayed flowering.</text>
</comment>
<comment type="sequence caution" evidence="5">
    <conflict type="erroneous initiation">
        <sequence resource="EMBL-CDS" id="AAM63239"/>
    </conflict>
    <text>Truncated N-terminus.</text>
</comment>
<feature type="chain" id="PRO_0000432320" description="VQ motif-containing protein 29">
    <location>
        <begin position="1"/>
        <end position="123"/>
    </location>
</feature>
<feature type="region of interest" description="Disordered" evidence="2">
    <location>
        <begin position="24"/>
        <end position="55"/>
    </location>
</feature>
<feature type="region of interest" description="Disordered" evidence="2">
    <location>
        <begin position="77"/>
        <end position="123"/>
    </location>
</feature>
<feature type="short sequence motif" description="VQ" evidence="5">
    <location>
        <begin position="66"/>
        <end position="75"/>
    </location>
</feature>
<feature type="compositionally biased region" description="Basic residues" evidence="2">
    <location>
        <begin position="33"/>
        <end position="43"/>
    </location>
</feature>
<feature type="compositionally biased region" description="Basic and acidic residues" evidence="2">
    <location>
        <begin position="77"/>
        <end position="94"/>
    </location>
</feature>
<feature type="compositionally biased region" description="Low complexity" evidence="2">
    <location>
        <begin position="97"/>
        <end position="108"/>
    </location>
</feature>
<feature type="compositionally biased region" description="Polar residues" evidence="2">
    <location>
        <begin position="109"/>
        <end position="123"/>
    </location>
</feature>
<feature type="sequence conflict" description="In Ref. 4; AAM63239." evidence="5" ref="4">
    <original>T</original>
    <variation>A</variation>
    <location>
        <position position="20"/>
    </location>
</feature>
<feature type="sequence conflict" description="In Ref. 4; AAM63239." evidence="5" ref="4">
    <original>I</original>
    <variation>ISS</variation>
    <location>
        <position position="47"/>
    </location>
</feature>
<feature type="sequence conflict" description="In Ref. 4; AAM63239." evidence="5" ref="4">
    <original>V</original>
    <variation>E</variation>
    <location>
        <position position="68"/>
    </location>
</feature>
<sequence length="123" mass="13809">MEATSQQFMSQSYLNAQETTTRATKNYLTSLHSTRKQPSKPLKRPAISSPLNPMHPHVYRVEPVNFKVLVQRLTGAPEHETVQAKPLKTSDDAAKQSSSSFAFDPSSSWGDFSFQNPANISRW</sequence>
<name>VQ29_ARATH</name>
<organism>
    <name type="scientific">Arabidopsis thaliana</name>
    <name type="common">Mouse-ear cress</name>
    <dbReference type="NCBI Taxonomy" id="3702"/>
    <lineage>
        <taxon>Eukaryota</taxon>
        <taxon>Viridiplantae</taxon>
        <taxon>Streptophyta</taxon>
        <taxon>Embryophyta</taxon>
        <taxon>Tracheophyta</taxon>
        <taxon>Spermatophyta</taxon>
        <taxon>Magnoliopsida</taxon>
        <taxon>eudicotyledons</taxon>
        <taxon>Gunneridae</taxon>
        <taxon>Pentapetalae</taxon>
        <taxon>rosids</taxon>
        <taxon>malvids</taxon>
        <taxon>Brassicales</taxon>
        <taxon>Brassicaceae</taxon>
        <taxon>Camelineae</taxon>
        <taxon>Arabidopsis</taxon>
    </lineage>
</organism>
<dbReference type="EMBL" id="AL035605">
    <property type="protein sequence ID" value="CAB38310.1"/>
    <property type="molecule type" value="Genomic_DNA"/>
</dbReference>
<dbReference type="EMBL" id="AL161592">
    <property type="protein sequence ID" value="CAB80436.1"/>
    <property type="molecule type" value="Genomic_DNA"/>
</dbReference>
<dbReference type="EMBL" id="CP002687">
    <property type="protein sequence ID" value="AEE86830.1"/>
    <property type="molecule type" value="Genomic_DNA"/>
</dbReference>
<dbReference type="EMBL" id="CP002687">
    <property type="protein sequence ID" value="ANM67051.1"/>
    <property type="molecule type" value="Genomic_DNA"/>
</dbReference>
<dbReference type="EMBL" id="BT029306">
    <property type="protein sequence ID" value="ABK32120.1"/>
    <property type="molecule type" value="mRNA"/>
</dbReference>
<dbReference type="EMBL" id="AY086029">
    <property type="protein sequence ID" value="AAM63239.1"/>
    <property type="status" value="ALT_INIT"/>
    <property type="molecule type" value="mRNA"/>
</dbReference>
<dbReference type="PIR" id="T04728">
    <property type="entry name" value="T04728"/>
</dbReference>
<dbReference type="RefSeq" id="NP_001320154.1">
    <property type="nucleotide sequence ID" value="NM_001342455.1"/>
</dbReference>
<dbReference type="RefSeq" id="NP_195485.1">
    <property type="nucleotide sequence ID" value="NM_119933.3"/>
</dbReference>
<dbReference type="FunCoup" id="Q9SZG3">
    <property type="interactions" value="6"/>
</dbReference>
<dbReference type="IntAct" id="Q9SZG3">
    <property type="interactions" value="3"/>
</dbReference>
<dbReference type="STRING" id="3702.Q9SZG3"/>
<dbReference type="PaxDb" id="3702-AT4G37710.1"/>
<dbReference type="EnsemblPlants" id="AT4G37710.1">
    <property type="protein sequence ID" value="AT4G37710.1"/>
    <property type="gene ID" value="AT4G37710"/>
</dbReference>
<dbReference type="EnsemblPlants" id="AT4G37710.2">
    <property type="protein sequence ID" value="AT4G37710.2"/>
    <property type="gene ID" value="AT4G37710"/>
</dbReference>
<dbReference type="GeneID" id="829927"/>
<dbReference type="Gramene" id="AT4G37710.1">
    <property type="protein sequence ID" value="AT4G37710.1"/>
    <property type="gene ID" value="AT4G37710"/>
</dbReference>
<dbReference type="Gramene" id="AT4G37710.2">
    <property type="protein sequence ID" value="AT4G37710.2"/>
    <property type="gene ID" value="AT4G37710"/>
</dbReference>
<dbReference type="KEGG" id="ath:AT4G37710"/>
<dbReference type="Araport" id="AT4G37710"/>
<dbReference type="TAIR" id="AT4G37710">
    <property type="gene designation" value="VQ29"/>
</dbReference>
<dbReference type="HOGENOM" id="CLU_2018360_0_0_1"/>
<dbReference type="InParanoid" id="Q9SZG3"/>
<dbReference type="OMA" id="MEATSQQ"/>
<dbReference type="PhylomeDB" id="Q9SZG3"/>
<dbReference type="PRO" id="PR:Q9SZG3"/>
<dbReference type="Proteomes" id="UP000006548">
    <property type="component" value="Chromosome 4"/>
</dbReference>
<dbReference type="ExpressionAtlas" id="Q9SZG3">
    <property type="expression patterns" value="baseline and differential"/>
</dbReference>
<dbReference type="GO" id="GO:0005634">
    <property type="term" value="C:nucleus"/>
    <property type="evidence" value="ECO:0007669"/>
    <property type="project" value="UniProtKB-SubCell"/>
</dbReference>
<dbReference type="GO" id="GO:0071456">
    <property type="term" value="P:cellular response to hypoxia"/>
    <property type="evidence" value="ECO:0000270"/>
    <property type="project" value="TAIR"/>
</dbReference>
<dbReference type="GO" id="GO:0009908">
    <property type="term" value="P:flower development"/>
    <property type="evidence" value="ECO:0007669"/>
    <property type="project" value="UniProtKB-KW"/>
</dbReference>
<dbReference type="InterPro" id="IPR008889">
    <property type="entry name" value="VQ"/>
</dbReference>
<dbReference type="InterPro" id="IPR039610">
    <property type="entry name" value="VQ29"/>
</dbReference>
<dbReference type="PANTHER" id="PTHR34794">
    <property type="entry name" value="EXPRESSED PROTEIN"/>
    <property type="match status" value="1"/>
</dbReference>
<dbReference type="PANTHER" id="PTHR34794:SF3">
    <property type="entry name" value="VQ MOTIF-CONTAINING PROTEIN 29"/>
    <property type="match status" value="1"/>
</dbReference>
<dbReference type="Pfam" id="PF05678">
    <property type="entry name" value="VQ"/>
    <property type="match status" value="1"/>
</dbReference>
<gene>
    <name evidence="4" type="primary">VQ29</name>
    <name evidence="7" type="ordered locus">At4g37710</name>
    <name evidence="8" type="ORF">F19F18.200</name>
</gene>